<accession>Q34101</accession>
<accession>O63854</accession>
<sequence length="379" mass="42594">MTNIRKTHPLAKIVNNSFIDLPAPSNISAWWNFGSLLGVCLILQILTGLFLAMHYTSDTATAFSSVTHICRDVNYGWIIRYMHANGASMFFICLFLHVGRGLYYGSYVFMETWNIGIVLLFATMATAFMGYVLPWGQMSFWGATVITNLLSAIPYIGTDLVEWIWGGFSVDKATLTRFFAFHFILPFIIAALAMVHLLFLHETGSNNPSGITSDSDKIPFHPYYTIKDILGALLLLLILMSLVLFSPDLLGDPDNYTPANPLNTPPHIKPEWYFLFAYAILRSIPNKLGGVLALVFSILILAFIPLLHTSKQRSMMFRPLSQCLFWLLVADLLTLTWIGGQPVEHPFIIIGQVASILYFTILLILMPTVSVIENNLLKW</sequence>
<gene>
    <name type="primary">MT-CYB</name>
    <name type="synonym">COB</name>
    <name type="synonym">CYTB</name>
    <name type="synonym">MTCYB</name>
</gene>
<reference key="1">
    <citation type="journal article" date="1998" name="Mol. Phylogenet. Evol.">
        <title>The complete nucleotide sequence of the domestic dog (Canis familiaris) mitochondrial genome.</title>
        <authorList>
            <person name="Kim K.S."/>
            <person name="Lee S.E."/>
            <person name="Jeong H.W."/>
            <person name="Ha J.H."/>
        </authorList>
    </citation>
    <scope>NUCLEOTIDE SEQUENCE [GENOMIC DNA]</scope>
    <source>
        <strain evidence="6">Boxer</strain>
    </source>
</reference>
<reference key="2">
    <citation type="journal article" date="2002" name="Mamm. Genome">
        <title>Multiple nuclear pseudogenes of mitochondrial DNA exist in the canine genome.</title>
        <authorList>
            <person name="Ishiguro N."/>
            <person name="Nakajima A."/>
            <person name="Horiuchi M."/>
            <person name="Shinagawa M."/>
        </authorList>
    </citation>
    <scope>NUCLEOTIDE SEQUENCE [GENOMIC DNA]</scope>
</reference>
<reference key="3">
    <citation type="submission" date="2004-08" db="EMBL/GenBank/DDBJ databases">
        <title>The complete mitochondrial DNA sequence of the Beagle dog (Canis familiaris).</title>
        <authorList>
            <person name="Zhu S."/>
            <person name="Xu Q."/>
            <person name="Chang H."/>
        </authorList>
    </citation>
    <scope>NUCLEOTIDE SEQUENCE [GENOMIC DNA]</scope>
    <source>
        <strain>Beagle</strain>
    </source>
</reference>
<reference key="4">
    <citation type="submission" date="1995-01" db="EMBL/GenBank/DDBJ databases">
        <authorList>
            <person name="Lento G.M."/>
            <person name="Hickson R.E."/>
            <person name="Chambers G.K."/>
            <person name="Penny D."/>
        </authorList>
    </citation>
    <scope>NUCLEOTIDE SEQUENCE [GENOMIC DNA] OF 1-125</scope>
</reference>
<reference key="5">
    <citation type="submission" date="1998-05" db="EMBL/GenBank/DDBJ databases">
        <authorList>
            <person name="Kim K.S."/>
            <person name="Jeong H.W."/>
            <person name="Ha J.H."/>
        </authorList>
    </citation>
    <scope>NUCLEOTIDE SEQUENCE [GENOMIC DNA] OF 24-150</scope>
    <source>
        <strain>Shepherd</strain>
    </source>
</reference>
<feature type="chain" id="PRO_0000060716" description="Cytochrome b">
    <location>
        <begin position="1"/>
        <end position="379"/>
    </location>
</feature>
<feature type="transmembrane region" description="Helical" evidence="2">
    <location>
        <begin position="33"/>
        <end position="53"/>
    </location>
</feature>
<feature type="transmembrane region" description="Helical" evidence="2">
    <location>
        <begin position="77"/>
        <end position="98"/>
    </location>
</feature>
<feature type="transmembrane region" description="Helical" evidence="2">
    <location>
        <begin position="113"/>
        <end position="133"/>
    </location>
</feature>
<feature type="transmembrane region" description="Helical" evidence="2">
    <location>
        <begin position="178"/>
        <end position="198"/>
    </location>
</feature>
<feature type="transmembrane region" description="Helical" evidence="2">
    <location>
        <begin position="226"/>
        <end position="246"/>
    </location>
</feature>
<feature type="transmembrane region" description="Helical" evidence="2">
    <location>
        <begin position="288"/>
        <end position="308"/>
    </location>
</feature>
<feature type="transmembrane region" description="Helical" evidence="2">
    <location>
        <begin position="320"/>
        <end position="340"/>
    </location>
</feature>
<feature type="transmembrane region" description="Helical" evidence="2">
    <location>
        <begin position="347"/>
        <end position="367"/>
    </location>
</feature>
<feature type="binding site" description="axial binding residue" evidence="2">
    <location>
        <position position="83"/>
    </location>
    <ligand>
        <name>heme b</name>
        <dbReference type="ChEBI" id="CHEBI:60344"/>
        <label>b562</label>
    </ligand>
    <ligandPart>
        <name>Fe</name>
        <dbReference type="ChEBI" id="CHEBI:18248"/>
    </ligandPart>
</feature>
<feature type="binding site" description="axial binding residue" evidence="2">
    <location>
        <position position="97"/>
    </location>
    <ligand>
        <name>heme b</name>
        <dbReference type="ChEBI" id="CHEBI:60344"/>
        <label>b566</label>
    </ligand>
    <ligandPart>
        <name>Fe</name>
        <dbReference type="ChEBI" id="CHEBI:18248"/>
    </ligandPart>
</feature>
<feature type="binding site" description="axial binding residue" evidence="2">
    <location>
        <position position="182"/>
    </location>
    <ligand>
        <name>heme b</name>
        <dbReference type="ChEBI" id="CHEBI:60344"/>
        <label>b562</label>
    </ligand>
    <ligandPart>
        <name>Fe</name>
        <dbReference type="ChEBI" id="CHEBI:18248"/>
    </ligandPart>
</feature>
<feature type="binding site" description="axial binding residue" evidence="2">
    <location>
        <position position="196"/>
    </location>
    <ligand>
        <name>heme b</name>
        <dbReference type="ChEBI" id="CHEBI:60344"/>
        <label>b566</label>
    </ligand>
    <ligandPart>
        <name>Fe</name>
        <dbReference type="ChEBI" id="CHEBI:18248"/>
    </ligandPart>
</feature>
<feature type="binding site" evidence="2">
    <location>
        <position position="201"/>
    </location>
    <ligand>
        <name>a ubiquinone</name>
        <dbReference type="ChEBI" id="CHEBI:16389"/>
    </ligand>
</feature>
<feature type="sequence conflict" description="In Ref. 4; AAA58587." evidence="5" ref="4">
    <original>A</original>
    <variation>S</variation>
    <location>
        <position position="60"/>
    </location>
</feature>
<dbReference type="EMBL" id="U96639">
    <property type="protein sequence ID" value="AAD04775.1"/>
    <property type="molecule type" value="Genomic_DNA"/>
</dbReference>
<dbReference type="EMBL" id="AB048590">
    <property type="protein sequence ID" value="BAB39140.1"/>
    <property type="molecule type" value="Genomic_DNA"/>
</dbReference>
<dbReference type="EMBL" id="AY729880">
    <property type="protein sequence ID" value="AAU12159.1"/>
    <property type="molecule type" value="Genomic_DNA"/>
</dbReference>
<dbReference type="EMBL" id="U12829">
    <property type="protein sequence ID" value="AAA58587.2"/>
    <property type="molecule type" value="Genomic_DNA"/>
</dbReference>
<dbReference type="EMBL" id="AF064587">
    <property type="protein sequence ID" value="AAC18595.1"/>
    <property type="molecule type" value="Genomic_DNA"/>
</dbReference>
<dbReference type="PIR" id="T11505">
    <property type="entry name" value="T11505"/>
</dbReference>
<dbReference type="RefSeq" id="NP_008483.1">
    <property type="nucleotide sequence ID" value="NC_002008.4"/>
</dbReference>
<dbReference type="SMR" id="Q34101"/>
<dbReference type="FunCoup" id="Q34101">
    <property type="interactions" value="20"/>
</dbReference>
<dbReference type="STRING" id="9615.ENSCAFP00000030321"/>
<dbReference type="PaxDb" id="9612-ENSCAFP00000030321"/>
<dbReference type="GeneID" id="804486"/>
<dbReference type="KEGG" id="cfa:804486"/>
<dbReference type="CTD" id="4519"/>
<dbReference type="eggNOG" id="KOG4663">
    <property type="taxonomic scope" value="Eukaryota"/>
</dbReference>
<dbReference type="HOGENOM" id="CLU_031114_3_0_1"/>
<dbReference type="InParanoid" id="Q34101"/>
<dbReference type="OMA" id="NISAWWN"/>
<dbReference type="TreeFam" id="TF353088"/>
<dbReference type="Proteomes" id="UP000002254">
    <property type="component" value="Mitochondrion"/>
</dbReference>
<dbReference type="Proteomes" id="UP000694429">
    <property type="component" value="Unplaced"/>
</dbReference>
<dbReference type="Proteomes" id="UP000694542">
    <property type="component" value="Unassembled WGS sequence"/>
</dbReference>
<dbReference type="Proteomes" id="UP000805418">
    <property type="component" value="Mitochondrion MT"/>
</dbReference>
<dbReference type="Bgee" id="ENSCAFG00000022742">
    <property type="expression patterns" value="Expressed in cardiac muscle of left ventricle and 45 other cell types or tissues"/>
</dbReference>
<dbReference type="GO" id="GO:0016020">
    <property type="term" value="C:membrane"/>
    <property type="evidence" value="ECO:0000318"/>
    <property type="project" value="GO_Central"/>
</dbReference>
<dbReference type="GO" id="GO:0005743">
    <property type="term" value="C:mitochondrial inner membrane"/>
    <property type="evidence" value="ECO:0007669"/>
    <property type="project" value="UniProtKB-SubCell"/>
</dbReference>
<dbReference type="GO" id="GO:0045275">
    <property type="term" value="C:respiratory chain complex III"/>
    <property type="evidence" value="ECO:0000318"/>
    <property type="project" value="GO_Central"/>
</dbReference>
<dbReference type="GO" id="GO:0046872">
    <property type="term" value="F:metal ion binding"/>
    <property type="evidence" value="ECO:0007669"/>
    <property type="project" value="UniProtKB-KW"/>
</dbReference>
<dbReference type="GO" id="GO:0008121">
    <property type="term" value="F:ubiquinol-cytochrome-c reductase activity"/>
    <property type="evidence" value="ECO:0007669"/>
    <property type="project" value="InterPro"/>
</dbReference>
<dbReference type="GO" id="GO:0006122">
    <property type="term" value="P:mitochondrial electron transport, ubiquinol to cytochrome c"/>
    <property type="evidence" value="ECO:0000318"/>
    <property type="project" value="GO_Central"/>
</dbReference>
<dbReference type="CDD" id="cd00290">
    <property type="entry name" value="cytochrome_b_C"/>
    <property type="match status" value="1"/>
</dbReference>
<dbReference type="CDD" id="cd00284">
    <property type="entry name" value="Cytochrome_b_N"/>
    <property type="match status" value="1"/>
</dbReference>
<dbReference type="FunFam" id="1.20.810.10:FF:000002">
    <property type="entry name" value="Cytochrome b"/>
    <property type="match status" value="1"/>
</dbReference>
<dbReference type="Gene3D" id="1.20.810.10">
    <property type="entry name" value="Cytochrome Bc1 Complex, Chain C"/>
    <property type="match status" value="1"/>
</dbReference>
<dbReference type="InterPro" id="IPR005798">
    <property type="entry name" value="Cyt_b/b6_C"/>
</dbReference>
<dbReference type="InterPro" id="IPR036150">
    <property type="entry name" value="Cyt_b/b6_C_sf"/>
</dbReference>
<dbReference type="InterPro" id="IPR005797">
    <property type="entry name" value="Cyt_b/b6_N"/>
</dbReference>
<dbReference type="InterPro" id="IPR027387">
    <property type="entry name" value="Cytb/b6-like_sf"/>
</dbReference>
<dbReference type="InterPro" id="IPR030689">
    <property type="entry name" value="Cytochrome_b"/>
</dbReference>
<dbReference type="InterPro" id="IPR048260">
    <property type="entry name" value="Cytochrome_b_C_euk/bac"/>
</dbReference>
<dbReference type="InterPro" id="IPR048259">
    <property type="entry name" value="Cytochrome_b_N_euk/bac"/>
</dbReference>
<dbReference type="InterPro" id="IPR016174">
    <property type="entry name" value="Di-haem_cyt_TM"/>
</dbReference>
<dbReference type="PANTHER" id="PTHR19271">
    <property type="entry name" value="CYTOCHROME B"/>
    <property type="match status" value="1"/>
</dbReference>
<dbReference type="PANTHER" id="PTHR19271:SF16">
    <property type="entry name" value="CYTOCHROME B"/>
    <property type="match status" value="1"/>
</dbReference>
<dbReference type="Pfam" id="PF00032">
    <property type="entry name" value="Cytochrom_B_C"/>
    <property type="match status" value="1"/>
</dbReference>
<dbReference type="Pfam" id="PF00033">
    <property type="entry name" value="Cytochrome_B"/>
    <property type="match status" value="1"/>
</dbReference>
<dbReference type="PIRSF" id="PIRSF038885">
    <property type="entry name" value="COB"/>
    <property type="match status" value="1"/>
</dbReference>
<dbReference type="SUPFAM" id="SSF81648">
    <property type="entry name" value="a domain/subunit of cytochrome bc1 complex (Ubiquinol-cytochrome c reductase)"/>
    <property type="match status" value="1"/>
</dbReference>
<dbReference type="SUPFAM" id="SSF81342">
    <property type="entry name" value="Transmembrane di-heme cytochromes"/>
    <property type="match status" value="1"/>
</dbReference>
<dbReference type="PROSITE" id="PS51003">
    <property type="entry name" value="CYTB_CTER"/>
    <property type="match status" value="1"/>
</dbReference>
<dbReference type="PROSITE" id="PS51002">
    <property type="entry name" value="CYTB_NTER"/>
    <property type="match status" value="1"/>
</dbReference>
<geneLocation type="mitochondrion"/>
<evidence type="ECO:0000250" key="1"/>
<evidence type="ECO:0000250" key="2">
    <source>
        <dbReference type="UniProtKB" id="P00157"/>
    </source>
</evidence>
<evidence type="ECO:0000255" key="3">
    <source>
        <dbReference type="PROSITE-ProRule" id="PRU00967"/>
    </source>
</evidence>
<evidence type="ECO:0000255" key="4">
    <source>
        <dbReference type="PROSITE-ProRule" id="PRU00968"/>
    </source>
</evidence>
<evidence type="ECO:0000305" key="5"/>
<evidence type="ECO:0000312" key="6">
    <source>
        <dbReference type="Proteomes" id="UP000002254"/>
    </source>
</evidence>
<name>CYB_CANLF</name>
<proteinExistence type="inferred from homology"/>
<protein>
    <recommendedName>
        <fullName>Cytochrome b</fullName>
    </recommendedName>
    <alternativeName>
        <fullName>Complex III subunit 3</fullName>
    </alternativeName>
    <alternativeName>
        <fullName>Complex III subunit III</fullName>
    </alternativeName>
    <alternativeName>
        <fullName>Cytochrome b-c1 complex subunit 3</fullName>
    </alternativeName>
    <alternativeName>
        <fullName>Ubiquinol-cytochrome-c reductase complex cytochrome b subunit</fullName>
    </alternativeName>
</protein>
<comment type="function">
    <text evidence="2">Component of the ubiquinol-cytochrome c reductase complex (complex III or cytochrome b-c1 complex) that is part of the mitochondrial respiratory chain. The b-c1 complex mediates electron transfer from ubiquinol to cytochrome c. Contributes to the generation of a proton gradient across the mitochondrial membrane that is then used for ATP synthesis.</text>
</comment>
<comment type="cofactor">
    <cofactor evidence="2">
        <name>heme b</name>
        <dbReference type="ChEBI" id="CHEBI:60344"/>
    </cofactor>
    <text evidence="2">Binds 2 heme b groups non-covalently.</text>
</comment>
<comment type="subunit">
    <text evidence="2">The cytochrome bc1 complex contains 11 subunits: 3 respiratory subunits (MT-CYB, CYC1 and UQCRFS1), 2 core proteins (UQCRC1 and UQCRC2) and 6 low-molecular weight proteins (UQCRH/QCR6, UQCRB/QCR7, UQCRQ/QCR8, UQCR10/QCR9, UQCR11/QCR10 and a cleavage product of UQCRFS1). This cytochrome bc1 complex then forms a dimer.</text>
</comment>
<comment type="subcellular location">
    <subcellularLocation>
        <location evidence="2">Mitochondrion inner membrane</location>
        <topology evidence="2">Multi-pass membrane protein</topology>
    </subcellularLocation>
</comment>
<comment type="miscellaneous">
    <text evidence="1">Heme 1 (or BL or b562) is low-potential and absorbs at about 562 nm, and heme 2 (or BH or b566) is high-potential and absorbs at about 566 nm.</text>
</comment>
<comment type="similarity">
    <text evidence="3 4">Belongs to the cytochrome b family.</text>
</comment>
<comment type="caution">
    <text evidence="2">The full-length protein contains only eight transmembrane helices, not nine as predicted by bioinformatics tools.</text>
</comment>
<keyword id="KW-0249">Electron transport</keyword>
<keyword id="KW-0349">Heme</keyword>
<keyword id="KW-0408">Iron</keyword>
<keyword id="KW-0472">Membrane</keyword>
<keyword id="KW-0479">Metal-binding</keyword>
<keyword id="KW-0496">Mitochondrion</keyword>
<keyword id="KW-0999">Mitochondrion inner membrane</keyword>
<keyword id="KW-1185">Reference proteome</keyword>
<keyword id="KW-0679">Respiratory chain</keyword>
<keyword id="KW-0812">Transmembrane</keyword>
<keyword id="KW-1133">Transmembrane helix</keyword>
<keyword id="KW-0813">Transport</keyword>
<keyword id="KW-0830">Ubiquinone</keyword>
<organism>
    <name type="scientific">Canis lupus familiaris</name>
    <name type="common">Dog</name>
    <name type="synonym">Canis familiaris</name>
    <dbReference type="NCBI Taxonomy" id="9615"/>
    <lineage>
        <taxon>Eukaryota</taxon>
        <taxon>Metazoa</taxon>
        <taxon>Chordata</taxon>
        <taxon>Craniata</taxon>
        <taxon>Vertebrata</taxon>
        <taxon>Euteleostomi</taxon>
        <taxon>Mammalia</taxon>
        <taxon>Eutheria</taxon>
        <taxon>Laurasiatheria</taxon>
        <taxon>Carnivora</taxon>
        <taxon>Caniformia</taxon>
        <taxon>Canidae</taxon>
        <taxon>Canis</taxon>
    </lineage>
</organism>